<name>RL38_ARTSF</name>
<sequence>MPKQLMEIKDFLIKARRKDAKSCKIKKNPDNTKFKLRCSRFLYTLVITDSEKAEKLKKSLPPGLQVKELK</sequence>
<accession>A7L6A2</accession>
<comment type="similarity">
    <text evidence="1">Belongs to the eukaryotic ribosomal protein eL38 family.</text>
</comment>
<keyword id="KW-0687">Ribonucleoprotein</keyword>
<keyword id="KW-0689">Ribosomal protein</keyword>
<proteinExistence type="inferred from homology"/>
<protein>
    <recommendedName>
        <fullName evidence="1">Large ribosomal subunit protein eL38</fullName>
    </recommendedName>
    <alternativeName>
        <fullName>60S ribosomal protein L38</fullName>
    </alternativeName>
</protein>
<dbReference type="EMBL" id="EF675775">
    <property type="protein sequence ID" value="ABS18357.1"/>
    <property type="molecule type" value="mRNA"/>
</dbReference>
<dbReference type="SMR" id="A7L6A2"/>
<dbReference type="GO" id="GO:0022625">
    <property type="term" value="C:cytosolic large ribosomal subunit"/>
    <property type="evidence" value="ECO:0007669"/>
    <property type="project" value="TreeGrafter"/>
</dbReference>
<dbReference type="GO" id="GO:0003735">
    <property type="term" value="F:structural constituent of ribosome"/>
    <property type="evidence" value="ECO:0007669"/>
    <property type="project" value="InterPro"/>
</dbReference>
<dbReference type="GO" id="GO:0022618">
    <property type="term" value="P:protein-RNA complex assembly"/>
    <property type="evidence" value="ECO:0007669"/>
    <property type="project" value="TreeGrafter"/>
</dbReference>
<dbReference type="GO" id="GO:0006412">
    <property type="term" value="P:translation"/>
    <property type="evidence" value="ECO:0007669"/>
    <property type="project" value="InterPro"/>
</dbReference>
<dbReference type="FunFam" id="3.30.720.90:FF:000001">
    <property type="entry name" value="60S ribosomal protein L38"/>
    <property type="match status" value="1"/>
</dbReference>
<dbReference type="Gene3D" id="3.30.720.90">
    <property type="match status" value="1"/>
</dbReference>
<dbReference type="InterPro" id="IPR002675">
    <property type="entry name" value="Ribosomal_eL38"/>
</dbReference>
<dbReference type="InterPro" id="IPR038464">
    <property type="entry name" value="Ribosomal_eL38_sf"/>
</dbReference>
<dbReference type="PANTHER" id="PTHR10965">
    <property type="entry name" value="60S RIBOSOMAL PROTEIN L38"/>
    <property type="match status" value="1"/>
</dbReference>
<dbReference type="PANTHER" id="PTHR10965:SF0">
    <property type="entry name" value="LARGE RIBOSOMAL SUBUNIT PROTEIN EL38"/>
    <property type="match status" value="1"/>
</dbReference>
<dbReference type="Pfam" id="PF01781">
    <property type="entry name" value="Ribosomal_L38e"/>
    <property type="match status" value="1"/>
</dbReference>
<evidence type="ECO:0000305" key="1"/>
<reference key="1">
    <citation type="submission" date="2007-06" db="EMBL/GenBank/DDBJ databases">
        <title>Isolation of an mRNA for 60S ribosomal protein L38 from Artemia franciscana.</title>
        <authorList>
            <person name="Wang L."/>
            <person name="Adornato P."/>
            <person name="Vershon A.K."/>
            <person name="Nemeroff M.E."/>
        </authorList>
    </citation>
    <scope>NUCLEOTIDE SEQUENCE [MRNA]</scope>
</reference>
<organism>
    <name type="scientific">Artemia franciscana</name>
    <name type="common">Brine shrimp</name>
    <name type="synonym">Artemia sanfranciscana</name>
    <dbReference type="NCBI Taxonomy" id="6661"/>
    <lineage>
        <taxon>Eukaryota</taxon>
        <taxon>Metazoa</taxon>
        <taxon>Ecdysozoa</taxon>
        <taxon>Arthropoda</taxon>
        <taxon>Crustacea</taxon>
        <taxon>Branchiopoda</taxon>
        <taxon>Anostraca</taxon>
        <taxon>Artemiidae</taxon>
        <taxon>Artemia</taxon>
    </lineage>
</organism>
<feature type="chain" id="PRO_0000319571" description="Large ribosomal subunit protein eL38">
    <location>
        <begin position="1"/>
        <end position="70"/>
    </location>
</feature>
<gene>
    <name type="primary">RPL38</name>
</gene>